<dbReference type="EC" id="7.1.1.-" evidence="1"/>
<dbReference type="EMBL" id="AE017126">
    <property type="protein sequence ID" value="AAP99371.1"/>
    <property type="molecule type" value="Genomic_DNA"/>
</dbReference>
<dbReference type="RefSeq" id="NP_874719.1">
    <property type="nucleotide sequence ID" value="NC_005042.1"/>
</dbReference>
<dbReference type="RefSeq" id="WP_011124480.1">
    <property type="nucleotide sequence ID" value="NC_005042.1"/>
</dbReference>
<dbReference type="SMR" id="Q7VDP3"/>
<dbReference type="STRING" id="167539.Pro_0325"/>
<dbReference type="EnsemblBacteria" id="AAP99371">
    <property type="protein sequence ID" value="AAP99371"/>
    <property type="gene ID" value="Pro_0325"/>
</dbReference>
<dbReference type="KEGG" id="pma:Pro_0325"/>
<dbReference type="PATRIC" id="fig|167539.5.peg.334"/>
<dbReference type="eggNOG" id="COG0838">
    <property type="taxonomic scope" value="Bacteria"/>
</dbReference>
<dbReference type="HOGENOM" id="CLU_119549_1_1_3"/>
<dbReference type="OrthoDB" id="9791970at2"/>
<dbReference type="Proteomes" id="UP000001420">
    <property type="component" value="Chromosome"/>
</dbReference>
<dbReference type="GO" id="GO:0030964">
    <property type="term" value="C:NADH dehydrogenase complex"/>
    <property type="evidence" value="ECO:0007669"/>
    <property type="project" value="TreeGrafter"/>
</dbReference>
<dbReference type="GO" id="GO:0031676">
    <property type="term" value="C:plasma membrane-derived thylakoid membrane"/>
    <property type="evidence" value="ECO:0007669"/>
    <property type="project" value="UniProtKB-SubCell"/>
</dbReference>
<dbReference type="GO" id="GO:0008137">
    <property type="term" value="F:NADH dehydrogenase (ubiquinone) activity"/>
    <property type="evidence" value="ECO:0007669"/>
    <property type="project" value="InterPro"/>
</dbReference>
<dbReference type="GO" id="GO:0048038">
    <property type="term" value="F:quinone binding"/>
    <property type="evidence" value="ECO:0007669"/>
    <property type="project" value="UniProtKB-KW"/>
</dbReference>
<dbReference type="GO" id="GO:0019684">
    <property type="term" value="P:photosynthesis, light reaction"/>
    <property type="evidence" value="ECO:0007669"/>
    <property type="project" value="UniProtKB-UniRule"/>
</dbReference>
<dbReference type="Gene3D" id="1.20.58.1610">
    <property type="entry name" value="NADH:ubiquinone/plastoquinone oxidoreductase, chain 3"/>
    <property type="match status" value="1"/>
</dbReference>
<dbReference type="HAMAP" id="MF_01394">
    <property type="entry name" value="NDH1_NuoA"/>
    <property type="match status" value="1"/>
</dbReference>
<dbReference type="InterPro" id="IPR023043">
    <property type="entry name" value="NAD(P)H_OxRDtase_bac/plastid"/>
</dbReference>
<dbReference type="InterPro" id="IPR000440">
    <property type="entry name" value="NADH_UbQ/plastoQ_OxRdtase_su3"/>
</dbReference>
<dbReference type="InterPro" id="IPR038430">
    <property type="entry name" value="NDAH_ubi_oxred_su3_sf"/>
</dbReference>
<dbReference type="PANTHER" id="PTHR11058">
    <property type="entry name" value="NADH-UBIQUINONE OXIDOREDUCTASE CHAIN 3"/>
    <property type="match status" value="1"/>
</dbReference>
<dbReference type="PANTHER" id="PTHR11058:SF9">
    <property type="entry name" value="NADH-UBIQUINONE OXIDOREDUCTASE CHAIN 3"/>
    <property type="match status" value="1"/>
</dbReference>
<dbReference type="Pfam" id="PF00507">
    <property type="entry name" value="Oxidored_q4"/>
    <property type="match status" value="1"/>
</dbReference>
<accession>Q7VDP3</accession>
<organism>
    <name type="scientific">Prochlorococcus marinus (strain SARG / CCMP1375 / SS120)</name>
    <dbReference type="NCBI Taxonomy" id="167539"/>
    <lineage>
        <taxon>Bacteria</taxon>
        <taxon>Bacillati</taxon>
        <taxon>Cyanobacteriota</taxon>
        <taxon>Cyanophyceae</taxon>
        <taxon>Synechococcales</taxon>
        <taxon>Prochlorococcaceae</taxon>
        <taxon>Prochlorococcus</taxon>
    </lineage>
</organism>
<proteinExistence type="inferred from homology"/>
<comment type="function">
    <text evidence="1">NDH-1 shuttles electrons from an unknown electron donor, via FMN and iron-sulfur (Fe-S) centers, to quinones in the respiratory and/or the photosynthetic chain. The immediate electron acceptor for the enzyme in this species is believed to be plastoquinone. Couples the redox reaction to proton translocation, and thus conserves the redox energy in a proton gradient. Cyanobacterial NDH-1 also plays a role in inorganic carbon-concentration.</text>
</comment>
<comment type="catalytic activity">
    <reaction evidence="1">
        <text>a plastoquinone + NADH + (n+1) H(+)(in) = a plastoquinol + NAD(+) + n H(+)(out)</text>
        <dbReference type="Rhea" id="RHEA:42608"/>
        <dbReference type="Rhea" id="RHEA-COMP:9561"/>
        <dbReference type="Rhea" id="RHEA-COMP:9562"/>
        <dbReference type="ChEBI" id="CHEBI:15378"/>
        <dbReference type="ChEBI" id="CHEBI:17757"/>
        <dbReference type="ChEBI" id="CHEBI:57540"/>
        <dbReference type="ChEBI" id="CHEBI:57945"/>
        <dbReference type="ChEBI" id="CHEBI:62192"/>
    </reaction>
</comment>
<comment type="catalytic activity">
    <reaction evidence="1">
        <text>a plastoquinone + NADPH + (n+1) H(+)(in) = a plastoquinol + NADP(+) + n H(+)(out)</text>
        <dbReference type="Rhea" id="RHEA:42612"/>
        <dbReference type="Rhea" id="RHEA-COMP:9561"/>
        <dbReference type="Rhea" id="RHEA-COMP:9562"/>
        <dbReference type="ChEBI" id="CHEBI:15378"/>
        <dbReference type="ChEBI" id="CHEBI:17757"/>
        <dbReference type="ChEBI" id="CHEBI:57783"/>
        <dbReference type="ChEBI" id="CHEBI:58349"/>
        <dbReference type="ChEBI" id="CHEBI:62192"/>
    </reaction>
</comment>
<comment type="subunit">
    <text evidence="1">NDH-1 can be composed of about 15 different subunits; different subcomplexes with different compositions have been identified which probably have different functions.</text>
</comment>
<comment type="subcellular location">
    <subcellularLocation>
        <location evidence="1">Cellular thylakoid membrane</location>
        <topology evidence="1">Multi-pass membrane protein</topology>
    </subcellularLocation>
</comment>
<comment type="similarity">
    <text evidence="1">Belongs to the complex I subunit 3 family.</text>
</comment>
<protein>
    <recommendedName>
        <fullName evidence="1">NAD(P)H-quinone oxidoreductase subunit 3</fullName>
        <ecNumber evidence="1">7.1.1.-</ecNumber>
    </recommendedName>
    <alternativeName>
        <fullName evidence="1">NAD(P)H dehydrogenase subunit 3</fullName>
    </alternativeName>
    <alternativeName>
        <fullName evidence="1">NADH-plastoquinone oxidoreductase subunit 3</fullName>
    </alternativeName>
    <alternativeName>
        <fullName evidence="1">NDH-1 subunit 3</fullName>
        <shortName evidence="1">NDH-C</shortName>
    </alternativeName>
</protein>
<feature type="chain" id="PRO_0000362718" description="NAD(P)H-quinone oxidoreductase subunit 3">
    <location>
        <begin position="1"/>
        <end position="120"/>
    </location>
</feature>
<feature type="transmembrane region" description="Helical" evidence="1">
    <location>
        <begin position="6"/>
        <end position="26"/>
    </location>
</feature>
<feature type="transmembrane region" description="Helical" evidence="1">
    <location>
        <begin position="64"/>
        <end position="84"/>
    </location>
</feature>
<feature type="transmembrane region" description="Helical" evidence="1">
    <location>
        <begin position="89"/>
        <end position="109"/>
    </location>
</feature>
<evidence type="ECO:0000255" key="1">
    <source>
        <dbReference type="HAMAP-Rule" id="MF_01394"/>
    </source>
</evidence>
<sequence>MFTLPGYDAFLGFLLISAAVPALALVTNKLISPKSQPGERELTYESGMEPIGGAWIQFNIRYYMFALVFVIFDVETVFLYPWAVAFHKLGLLAFIEALIFISILIVALAYAWRKGALEWS</sequence>
<keyword id="KW-0472">Membrane</keyword>
<keyword id="KW-0520">NAD</keyword>
<keyword id="KW-0521">NADP</keyword>
<keyword id="KW-0618">Plastoquinone</keyword>
<keyword id="KW-0874">Quinone</keyword>
<keyword id="KW-1185">Reference proteome</keyword>
<keyword id="KW-0793">Thylakoid</keyword>
<keyword id="KW-1278">Translocase</keyword>
<keyword id="KW-0812">Transmembrane</keyword>
<keyword id="KW-1133">Transmembrane helix</keyword>
<keyword id="KW-0813">Transport</keyword>
<gene>
    <name evidence="1" type="primary">ndhC</name>
    <name type="ordered locus">Pro_0325</name>
</gene>
<name>NU3C_PROMA</name>
<reference key="1">
    <citation type="journal article" date="2003" name="Proc. Natl. Acad. Sci. U.S.A.">
        <title>Genome sequence of the cyanobacterium Prochlorococcus marinus SS120, a nearly minimal oxyphototrophic genome.</title>
        <authorList>
            <person name="Dufresne A."/>
            <person name="Salanoubat M."/>
            <person name="Partensky F."/>
            <person name="Artiguenave F."/>
            <person name="Axmann I.M."/>
            <person name="Barbe V."/>
            <person name="Duprat S."/>
            <person name="Galperin M.Y."/>
            <person name="Koonin E.V."/>
            <person name="Le Gall F."/>
            <person name="Makarova K.S."/>
            <person name="Ostrowski M."/>
            <person name="Oztas S."/>
            <person name="Robert C."/>
            <person name="Rogozin I.B."/>
            <person name="Scanlan D.J."/>
            <person name="Tandeau de Marsac N."/>
            <person name="Weissenbach J."/>
            <person name="Wincker P."/>
            <person name="Wolf Y.I."/>
            <person name="Hess W.R."/>
        </authorList>
    </citation>
    <scope>NUCLEOTIDE SEQUENCE [LARGE SCALE GENOMIC DNA]</scope>
    <source>
        <strain>SARG / CCMP1375 / SS120</strain>
    </source>
</reference>